<keyword id="KW-0150">Chloroplast</keyword>
<keyword id="KW-0934">Plastid</keyword>
<keyword id="KW-0687">Ribonucleoprotein</keyword>
<keyword id="KW-0689">Ribosomal protein</keyword>
<keyword id="KW-0694">RNA-binding</keyword>
<keyword id="KW-0699">rRNA-binding</keyword>
<gene>
    <name evidence="1" type="primary">rps14</name>
</gene>
<name>RR14_ATRBE</name>
<comment type="function">
    <text evidence="1">Binds 16S rRNA, required for the assembly of 30S particles.</text>
</comment>
<comment type="subunit">
    <text evidence="1">Part of the 30S ribosomal subunit.</text>
</comment>
<comment type="subcellular location">
    <subcellularLocation>
        <location>Plastid</location>
        <location>Chloroplast</location>
    </subcellularLocation>
</comment>
<comment type="similarity">
    <text evidence="1">Belongs to the universal ribosomal protein uS14 family.</text>
</comment>
<geneLocation type="chloroplast"/>
<evidence type="ECO:0000255" key="1">
    <source>
        <dbReference type="HAMAP-Rule" id="MF_00537"/>
    </source>
</evidence>
<evidence type="ECO:0000256" key="2">
    <source>
        <dbReference type="SAM" id="MobiDB-lite"/>
    </source>
</evidence>
<evidence type="ECO:0000305" key="3"/>
<sequence>MAKKSLIQREKKRQKLEQKYHSIRRSSKKEISKVPSLSDKWEIYGKLQSLPRNSAPTRLHRRCFLTGRPRANYRDFGLSGHILREMVHACLLPGATRSSW</sequence>
<dbReference type="EMBL" id="AJ316582">
    <property type="protein sequence ID" value="CAC88042.1"/>
    <property type="molecule type" value="Genomic_DNA"/>
</dbReference>
<dbReference type="RefSeq" id="NP_783230.1">
    <property type="nucleotide sequence ID" value="NC_004561.1"/>
</dbReference>
<dbReference type="SMR" id="Q8S8X6"/>
<dbReference type="GeneID" id="806479"/>
<dbReference type="GO" id="GO:0009507">
    <property type="term" value="C:chloroplast"/>
    <property type="evidence" value="ECO:0007669"/>
    <property type="project" value="UniProtKB-SubCell"/>
</dbReference>
<dbReference type="GO" id="GO:0015935">
    <property type="term" value="C:small ribosomal subunit"/>
    <property type="evidence" value="ECO:0007669"/>
    <property type="project" value="TreeGrafter"/>
</dbReference>
<dbReference type="GO" id="GO:0019843">
    <property type="term" value="F:rRNA binding"/>
    <property type="evidence" value="ECO:0007669"/>
    <property type="project" value="UniProtKB-UniRule"/>
</dbReference>
<dbReference type="GO" id="GO:0003735">
    <property type="term" value="F:structural constituent of ribosome"/>
    <property type="evidence" value="ECO:0007669"/>
    <property type="project" value="InterPro"/>
</dbReference>
<dbReference type="GO" id="GO:0006412">
    <property type="term" value="P:translation"/>
    <property type="evidence" value="ECO:0007669"/>
    <property type="project" value="UniProtKB-UniRule"/>
</dbReference>
<dbReference type="FunFam" id="1.10.287.1480:FF:000001">
    <property type="entry name" value="30S ribosomal protein S14"/>
    <property type="match status" value="1"/>
</dbReference>
<dbReference type="Gene3D" id="1.10.287.1480">
    <property type="match status" value="1"/>
</dbReference>
<dbReference type="HAMAP" id="MF_00537">
    <property type="entry name" value="Ribosomal_uS14_1"/>
    <property type="match status" value="1"/>
</dbReference>
<dbReference type="InterPro" id="IPR001209">
    <property type="entry name" value="Ribosomal_uS14"/>
</dbReference>
<dbReference type="InterPro" id="IPR023036">
    <property type="entry name" value="Ribosomal_uS14_bac/plastid"/>
</dbReference>
<dbReference type="InterPro" id="IPR018271">
    <property type="entry name" value="Ribosomal_uS14_CS"/>
</dbReference>
<dbReference type="NCBIfam" id="NF006477">
    <property type="entry name" value="PRK08881.1"/>
    <property type="match status" value="1"/>
</dbReference>
<dbReference type="PANTHER" id="PTHR19836">
    <property type="entry name" value="30S RIBOSOMAL PROTEIN S14"/>
    <property type="match status" value="1"/>
</dbReference>
<dbReference type="PANTHER" id="PTHR19836:SF19">
    <property type="entry name" value="SMALL RIBOSOMAL SUBUNIT PROTEIN US14M"/>
    <property type="match status" value="1"/>
</dbReference>
<dbReference type="Pfam" id="PF00253">
    <property type="entry name" value="Ribosomal_S14"/>
    <property type="match status" value="1"/>
</dbReference>
<dbReference type="SUPFAM" id="SSF57716">
    <property type="entry name" value="Glucocorticoid receptor-like (DNA-binding domain)"/>
    <property type="match status" value="1"/>
</dbReference>
<dbReference type="PROSITE" id="PS00527">
    <property type="entry name" value="RIBOSOMAL_S14"/>
    <property type="match status" value="1"/>
</dbReference>
<protein>
    <recommendedName>
        <fullName evidence="1">Small ribosomal subunit protein uS14c</fullName>
    </recommendedName>
    <alternativeName>
        <fullName evidence="3">30S ribosomal protein S14, chloroplastic</fullName>
    </alternativeName>
</protein>
<accession>Q8S8X6</accession>
<feature type="chain" id="PRO_0000276667" description="Small ribosomal subunit protein uS14c">
    <location>
        <begin position="1"/>
        <end position="100"/>
    </location>
</feature>
<feature type="region of interest" description="Disordered" evidence="2">
    <location>
        <begin position="1"/>
        <end position="31"/>
    </location>
</feature>
<organism>
    <name type="scientific">Atropa belladonna</name>
    <name type="common">Belladonna</name>
    <name type="synonym">Deadly nightshade</name>
    <dbReference type="NCBI Taxonomy" id="33113"/>
    <lineage>
        <taxon>Eukaryota</taxon>
        <taxon>Viridiplantae</taxon>
        <taxon>Streptophyta</taxon>
        <taxon>Embryophyta</taxon>
        <taxon>Tracheophyta</taxon>
        <taxon>Spermatophyta</taxon>
        <taxon>Magnoliopsida</taxon>
        <taxon>eudicotyledons</taxon>
        <taxon>Gunneridae</taxon>
        <taxon>Pentapetalae</taxon>
        <taxon>asterids</taxon>
        <taxon>lamiids</taxon>
        <taxon>Solanales</taxon>
        <taxon>Solanaceae</taxon>
        <taxon>Solanoideae</taxon>
        <taxon>Hyoscyameae</taxon>
        <taxon>Atropa</taxon>
    </lineage>
</organism>
<proteinExistence type="inferred from homology"/>
<reference key="1">
    <citation type="journal article" date="2002" name="Mol. Biol. Evol.">
        <title>The plastid chromosome of Atropa belladonna and its comparison with that of Nicotiana tabacum: the role of RNA editing in generating divergence in the process of plant speciation.</title>
        <authorList>
            <person name="Schmitz-Linneweber C."/>
            <person name="Regel R."/>
            <person name="Du T.G."/>
            <person name="Hupfer H."/>
            <person name="Herrmann R.G."/>
            <person name="Maier R.M."/>
        </authorList>
    </citation>
    <scope>NUCLEOTIDE SEQUENCE [LARGE SCALE GENOMIC DNA]</scope>
    <source>
        <strain>cv. Ab5p(kan)</strain>
    </source>
</reference>